<reference key="1">
    <citation type="journal article" date="2004" name="Genome Res.">
        <title>The status, quality, and expansion of the NIH full-length cDNA project: the Mammalian Gene Collection (MGC).</title>
        <authorList>
            <consortium name="The MGC Project Team"/>
        </authorList>
    </citation>
    <scope>NUCLEOTIDE SEQUENCE [LARGE SCALE MRNA]</scope>
    <source>
        <strain>C57BL/6J</strain>
        <tissue>Colon</tissue>
        <tissue>Fetal brain</tissue>
    </source>
</reference>
<reference key="2">
    <citation type="journal article" date="2006" name="Mol. Cell. Proteomics">
        <title>Comprehensive identification of phosphorylation sites in postsynaptic density preparations.</title>
        <authorList>
            <person name="Trinidad J.C."/>
            <person name="Specht C.G."/>
            <person name="Thalhammer A."/>
            <person name="Schoepfer R."/>
            <person name="Burlingame A.L."/>
        </authorList>
    </citation>
    <scope>IDENTIFICATION BY MASS SPECTROMETRY [LARGE SCALE ANALYSIS]</scope>
    <source>
        <tissue>Brain</tissue>
    </source>
</reference>
<reference key="3">
    <citation type="journal article" date="2007" name="Proc. Natl. Acad. Sci. U.S.A.">
        <title>Large-scale phosphorylation analysis of mouse liver.</title>
        <authorList>
            <person name="Villen J."/>
            <person name="Beausoleil S.A."/>
            <person name="Gerber S.A."/>
            <person name="Gygi S.P."/>
        </authorList>
    </citation>
    <scope>PHOSPHORYLATION [LARGE SCALE ANALYSIS] AT THR-868; SER-901 AND SER-992</scope>
    <scope>IDENTIFICATION BY MASS SPECTROMETRY [LARGE SCALE ANALYSIS]</scope>
    <source>
        <tissue>Liver</tissue>
    </source>
</reference>
<reference key="4">
    <citation type="journal article" date="2008" name="J. Proteome Res.">
        <title>Large-scale identification and evolution indexing of tyrosine phosphorylation sites from murine brain.</title>
        <authorList>
            <person name="Ballif B.A."/>
            <person name="Carey G.R."/>
            <person name="Sunyaev S.R."/>
            <person name="Gygi S.P."/>
        </authorList>
    </citation>
    <scope>PHOSPHORYLATION [LARGE SCALE ANALYSIS] AT TYR-492</scope>
    <scope>IDENTIFICATION BY MASS SPECTROMETRY [LARGE SCALE ANALYSIS]</scope>
    <source>
        <tissue>Brain</tissue>
    </source>
</reference>
<reference key="5">
    <citation type="journal article" date="2009" name="Immunity">
        <title>The phagosomal proteome in interferon-gamma-activated macrophages.</title>
        <authorList>
            <person name="Trost M."/>
            <person name="English L."/>
            <person name="Lemieux S."/>
            <person name="Courcelles M."/>
            <person name="Desjardins M."/>
            <person name="Thibault P."/>
        </authorList>
    </citation>
    <scope>PHOSPHORYLATION [LARGE SCALE ANALYSIS] AT SER-925</scope>
    <scope>IDENTIFICATION BY MASS SPECTROMETRY [LARGE SCALE ANALYSIS]</scope>
</reference>
<reference key="6">
    <citation type="journal article" date="2010" name="Cell">
        <title>A tissue-specific atlas of mouse protein phosphorylation and expression.</title>
        <authorList>
            <person name="Huttlin E.L."/>
            <person name="Jedrychowski M.P."/>
            <person name="Elias J.E."/>
            <person name="Goswami T."/>
            <person name="Rad R."/>
            <person name="Beausoleil S.A."/>
            <person name="Villen J."/>
            <person name="Haas W."/>
            <person name="Sowa M.E."/>
            <person name="Gygi S.P."/>
        </authorList>
    </citation>
    <scope>PHOSPHORYLATION [LARGE SCALE ANALYSIS] AT SER-247; SER-251; SER-314; SER-864; THR-868; SER-901; THR-908; SER-992; THR-1140; SER-1142; THR-1145; SER-1146; SER-1149 AND THR-1151</scope>
    <scope>IDENTIFICATION BY MASS SPECTROMETRY [LARGE SCALE ANALYSIS]</scope>
    <source>
        <tissue>Brain</tissue>
        <tissue>Heart</tissue>
        <tissue>Kidney</tissue>
        <tissue>Liver</tissue>
        <tissue>Lung</tissue>
        <tissue>Pancreas</tissue>
        <tissue>Spleen</tissue>
        <tissue>Testis</tissue>
    </source>
</reference>
<gene>
    <name type="primary">Plekha6</name>
    <name type="synonym">Pepp3</name>
</gene>
<dbReference type="EMBL" id="BC031183">
    <property type="protein sequence ID" value="AAH31183.1"/>
    <property type="molecule type" value="mRNA"/>
</dbReference>
<dbReference type="EMBL" id="BC054547">
    <property type="protein sequence ID" value="AAH54547.1"/>
    <property type="molecule type" value="mRNA"/>
</dbReference>
<dbReference type="CCDS" id="CCDS15292.1"/>
<dbReference type="RefSeq" id="NP_891846.1">
    <property type="nucleotide sequence ID" value="NM_182930.2"/>
</dbReference>
<dbReference type="RefSeq" id="XP_036020623.1">
    <property type="nucleotide sequence ID" value="XM_036164730.1"/>
</dbReference>
<dbReference type="BMRB" id="Q7TQG1"/>
<dbReference type="SMR" id="Q7TQG1"/>
<dbReference type="BioGRID" id="232235">
    <property type="interactions" value="2"/>
</dbReference>
<dbReference type="FunCoup" id="Q7TQG1">
    <property type="interactions" value="161"/>
</dbReference>
<dbReference type="IntAct" id="Q7TQG1">
    <property type="interactions" value="2"/>
</dbReference>
<dbReference type="MINT" id="Q7TQG1"/>
<dbReference type="STRING" id="10090.ENSMUSP00000048214"/>
<dbReference type="GlyGen" id="Q7TQG1">
    <property type="glycosylation" value="4 sites, 2 N-linked glycans (2 sites)"/>
</dbReference>
<dbReference type="iPTMnet" id="Q7TQG1"/>
<dbReference type="PhosphoSitePlus" id="Q7TQG1"/>
<dbReference type="PaxDb" id="10090-ENSMUSP00000048214"/>
<dbReference type="ProteomicsDB" id="289653"/>
<dbReference type="Antibodypedia" id="34556">
    <property type="antibodies" value="114 antibodies from 19 providers"/>
</dbReference>
<dbReference type="DNASU" id="240753"/>
<dbReference type="Ensembl" id="ENSMUST00000038295.15">
    <property type="protein sequence ID" value="ENSMUSP00000048214.9"/>
    <property type="gene ID" value="ENSMUSG00000041757.18"/>
</dbReference>
<dbReference type="GeneID" id="240753"/>
<dbReference type="KEGG" id="mmu:240753"/>
<dbReference type="UCSC" id="uc007cpu.2">
    <property type="organism name" value="mouse"/>
</dbReference>
<dbReference type="AGR" id="MGI:2388662"/>
<dbReference type="CTD" id="22874"/>
<dbReference type="MGI" id="MGI:2388662">
    <property type="gene designation" value="Plekha6"/>
</dbReference>
<dbReference type="VEuPathDB" id="HostDB:ENSMUSG00000041757"/>
<dbReference type="eggNOG" id="ENOG502QQHD">
    <property type="taxonomic scope" value="Eukaryota"/>
</dbReference>
<dbReference type="GeneTree" id="ENSGT00940000159692"/>
<dbReference type="HOGENOM" id="CLU_008216_0_0_1"/>
<dbReference type="InParanoid" id="Q7TQG1"/>
<dbReference type="OMA" id="THREMEM"/>
<dbReference type="OrthoDB" id="43122at2759"/>
<dbReference type="PhylomeDB" id="Q7TQG1"/>
<dbReference type="TreeFam" id="TF329090"/>
<dbReference type="Reactome" id="R-MMU-1660499">
    <property type="pathway name" value="Synthesis of PIPs at the plasma membrane"/>
</dbReference>
<dbReference type="BioGRID-ORCS" id="240753">
    <property type="hits" value="2 hits in 63 CRISPR screens"/>
</dbReference>
<dbReference type="CD-CODE" id="CE726F99">
    <property type="entry name" value="Postsynaptic density"/>
</dbReference>
<dbReference type="ChiTaRS" id="Plekha6">
    <property type="organism name" value="mouse"/>
</dbReference>
<dbReference type="PRO" id="PR:Q7TQG1"/>
<dbReference type="Proteomes" id="UP000000589">
    <property type="component" value="Chromosome 1"/>
</dbReference>
<dbReference type="RNAct" id="Q7TQG1">
    <property type="molecule type" value="protein"/>
</dbReference>
<dbReference type="Bgee" id="ENSMUSG00000041757">
    <property type="expression patterns" value="Expressed in interventricular septum and 172 other cell types or tissues"/>
</dbReference>
<dbReference type="ExpressionAtlas" id="Q7TQG1">
    <property type="expression patterns" value="baseline and differential"/>
</dbReference>
<dbReference type="CDD" id="cd13248">
    <property type="entry name" value="PH_PEPP1_2_3"/>
    <property type="match status" value="1"/>
</dbReference>
<dbReference type="FunFam" id="2.30.29.30:FF:000083">
    <property type="entry name" value="Pleckstrin homology domain-containing family A member 5"/>
    <property type="match status" value="1"/>
</dbReference>
<dbReference type="Gene3D" id="2.30.29.30">
    <property type="entry name" value="Pleckstrin-homology domain (PH domain)/Phosphotyrosine-binding domain (PTB)"/>
    <property type="match status" value="1"/>
</dbReference>
<dbReference type="InterPro" id="IPR011993">
    <property type="entry name" value="PH-like_dom_sf"/>
</dbReference>
<dbReference type="InterPro" id="IPR001849">
    <property type="entry name" value="PH_domain"/>
</dbReference>
<dbReference type="InterPro" id="IPR040392">
    <property type="entry name" value="PKHA4-7_PH"/>
</dbReference>
<dbReference type="PANTHER" id="PTHR12752">
    <property type="entry name" value="PHOSPHOINOSITOL 3-PHOSPHATE-BINDING PROTEIN"/>
    <property type="match status" value="1"/>
</dbReference>
<dbReference type="PANTHER" id="PTHR12752:SF5">
    <property type="entry name" value="PLECKSTRIN HOMOLOGY DOMAIN-CONTAINING FAMILY A MEMBER 6"/>
    <property type="match status" value="1"/>
</dbReference>
<dbReference type="Pfam" id="PF00169">
    <property type="entry name" value="PH"/>
    <property type="match status" value="1"/>
</dbReference>
<dbReference type="SMART" id="SM00233">
    <property type="entry name" value="PH"/>
    <property type="match status" value="1"/>
</dbReference>
<dbReference type="SUPFAM" id="SSF50729">
    <property type="entry name" value="PH domain-like"/>
    <property type="match status" value="1"/>
</dbReference>
<dbReference type="PROSITE" id="PS50003">
    <property type="entry name" value="PH_DOMAIN"/>
    <property type="match status" value="1"/>
</dbReference>
<proteinExistence type="evidence at protein level"/>
<organism>
    <name type="scientific">Mus musculus</name>
    <name type="common">Mouse</name>
    <dbReference type="NCBI Taxonomy" id="10090"/>
    <lineage>
        <taxon>Eukaryota</taxon>
        <taxon>Metazoa</taxon>
        <taxon>Chordata</taxon>
        <taxon>Craniata</taxon>
        <taxon>Vertebrata</taxon>
        <taxon>Euteleostomi</taxon>
        <taxon>Mammalia</taxon>
        <taxon>Eutheria</taxon>
        <taxon>Euarchontoglires</taxon>
        <taxon>Glires</taxon>
        <taxon>Rodentia</taxon>
        <taxon>Myomorpha</taxon>
        <taxon>Muroidea</taxon>
        <taxon>Muridae</taxon>
        <taxon>Murinae</taxon>
        <taxon>Mus</taxon>
        <taxon>Mus</taxon>
    </lineage>
</organism>
<evidence type="ECO:0000250" key="1">
    <source>
        <dbReference type="UniProtKB" id="Q9Y2H5"/>
    </source>
</evidence>
<evidence type="ECO:0000255" key="2">
    <source>
        <dbReference type="PROSITE-ProRule" id="PRU00145"/>
    </source>
</evidence>
<evidence type="ECO:0000256" key="3">
    <source>
        <dbReference type="SAM" id="MobiDB-lite"/>
    </source>
</evidence>
<evidence type="ECO:0007744" key="4">
    <source>
    </source>
</evidence>
<evidence type="ECO:0007744" key="5">
    <source>
    </source>
</evidence>
<evidence type="ECO:0007744" key="6">
    <source>
    </source>
</evidence>
<evidence type="ECO:0007744" key="7">
    <source>
    </source>
</evidence>
<feature type="chain" id="PRO_0000053885" description="Pleckstrin homology domain-containing family A member 6">
    <location>
        <begin position="1"/>
        <end position="1173"/>
    </location>
</feature>
<feature type="domain" description="PH" evidence="2">
    <location>
        <begin position="59"/>
        <end position="158"/>
    </location>
</feature>
<feature type="region of interest" description="Disordered" evidence="3">
    <location>
        <begin position="1"/>
        <end position="39"/>
    </location>
</feature>
<feature type="region of interest" description="Disordered" evidence="3">
    <location>
        <begin position="163"/>
        <end position="346"/>
    </location>
</feature>
<feature type="region of interest" description="Disordered" evidence="3">
    <location>
        <begin position="737"/>
        <end position="872"/>
    </location>
</feature>
<feature type="region of interest" description="Disordered" evidence="3">
    <location>
        <begin position="888"/>
        <end position="984"/>
    </location>
</feature>
<feature type="region of interest" description="Disordered" evidence="3">
    <location>
        <begin position="1093"/>
        <end position="1114"/>
    </location>
</feature>
<feature type="region of interest" description="Disordered" evidence="3">
    <location>
        <begin position="1130"/>
        <end position="1173"/>
    </location>
</feature>
<feature type="compositionally biased region" description="Polar residues" evidence="3">
    <location>
        <begin position="1"/>
        <end position="22"/>
    </location>
</feature>
<feature type="compositionally biased region" description="Basic and acidic residues" evidence="3">
    <location>
        <begin position="201"/>
        <end position="233"/>
    </location>
</feature>
<feature type="compositionally biased region" description="Polar residues" evidence="3">
    <location>
        <begin position="270"/>
        <end position="281"/>
    </location>
</feature>
<feature type="compositionally biased region" description="Polar residues" evidence="3">
    <location>
        <begin position="311"/>
        <end position="322"/>
    </location>
</feature>
<feature type="compositionally biased region" description="Low complexity" evidence="3">
    <location>
        <begin position="761"/>
        <end position="782"/>
    </location>
</feature>
<feature type="compositionally biased region" description="Low complexity" evidence="3">
    <location>
        <begin position="789"/>
        <end position="799"/>
    </location>
</feature>
<feature type="compositionally biased region" description="Pro residues" evidence="3">
    <location>
        <begin position="815"/>
        <end position="824"/>
    </location>
</feature>
<feature type="compositionally biased region" description="Polar residues" evidence="3">
    <location>
        <begin position="915"/>
        <end position="926"/>
    </location>
</feature>
<feature type="compositionally biased region" description="Basic and acidic residues" evidence="3">
    <location>
        <begin position="940"/>
        <end position="952"/>
    </location>
</feature>
<feature type="compositionally biased region" description="Basic residues" evidence="3">
    <location>
        <begin position="953"/>
        <end position="967"/>
    </location>
</feature>
<feature type="compositionally biased region" description="Pro residues" evidence="3">
    <location>
        <begin position="1141"/>
        <end position="1155"/>
    </location>
</feature>
<feature type="modified residue" description="Phosphoserine" evidence="7">
    <location>
        <position position="247"/>
    </location>
</feature>
<feature type="modified residue" description="Phosphoserine" evidence="7">
    <location>
        <position position="251"/>
    </location>
</feature>
<feature type="modified residue" description="Phosphoserine" evidence="7">
    <location>
        <position position="314"/>
    </location>
</feature>
<feature type="modified residue" description="Phosphoserine" evidence="1">
    <location>
        <position position="459"/>
    </location>
</feature>
<feature type="modified residue" description="Phosphoserine" evidence="1">
    <location>
        <position position="461"/>
    </location>
</feature>
<feature type="modified residue" description="Phosphoserine" evidence="1">
    <location>
        <position position="472"/>
    </location>
</feature>
<feature type="modified residue" description="Phosphotyrosine" evidence="5">
    <location>
        <position position="492"/>
    </location>
</feature>
<feature type="modified residue" description="Phosphoserine" evidence="1">
    <location>
        <position position="665"/>
    </location>
</feature>
<feature type="modified residue" description="Phosphoserine" evidence="7">
    <location>
        <position position="864"/>
    </location>
</feature>
<feature type="modified residue" description="Phosphothreonine" evidence="4 7">
    <location>
        <position position="868"/>
    </location>
</feature>
<feature type="modified residue" description="Phosphoserine" evidence="4 7">
    <location>
        <position position="901"/>
    </location>
</feature>
<feature type="modified residue" description="Phosphothreonine" evidence="7">
    <location>
        <position position="908"/>
    </location>
</feature>
<feature type="modified residue" description="Phosphoserine" evidence="6">
    <location>
        <position position="925"/>
    </location>
</feature>
<feature type="modified residue" description="Phosphoserine" evidence="1">
    <location>
        <position position="973"/>
    </location>
</feature>
<feature type="modified residue" description="Phosphoserine" evidence="1">
    <location>
        <position position="979"/>
    </location>
</feature>
<feature type="modified residue" description="Phosphoserine" evidence="4 7">
    <location>
        <position position="992"/>
    </location>
</feature>
<feature type="modified residue" description="Phosphothreonine" evidence="1">
    <location>
        <position position="1045"/>
    </location>
</feature>
<feature type="modified residue" description="Phosphoserine" evidence="1">
    <location>
        <position position="1065"/>
    </location>
</feature>
<feature type="modified residue" description="Phosphothreonine" evidence="7">
    <location>
        <position position="1140"/>
    </location>
</feature>
<feature type="modified residue" description="Phosphoserine" evidence="7">
    <location>
        <position position="1142"/>
    </location>
</feature>
<feature type="modified residue" description="Phosphothreonine" evidence="7">
    <location>
        <position position="1145"/>
    </location>
</feature>
<feature type="modified residue" description="Phosphoserine" evidence="7">
    <location>
        <position position="1146"/>
    </location>
</feature>
<feature type="modified residue" description="Phosphoserine" evidence="7">
    <location>
        <position position="1149"/>
    </location>
</feature>
<feature type="modified residue" description="Phosphothreonine" evidence="7">
    <location>
        <position position="1151"/>
    </location>
</feature>
<protein>
    <recommendedName>
        <fullName>Pleckstrin homology domain-containing family A member 6</fullName>
        <shortName>PH domain-containing family A member 6</shortName>
    </recommendedName>
    <alternativeName>
        <fullName>Phosphoinositol 3-phosphate-binding protein 3</fullName>
        <shortName>PEPP-3</shortName>
    </alternativeName>
</protein>
<keyword id="KW-0597">Phosphoprotein</keyword>
<keyword id="KW-1185">Reference proteome</keyword>
<sequence length="1173" mass="131427">MSNKTGGKRSATINSDIANHNMVSEVPPERPNIRATRTSRKAIAFGKRAHSMKRNPNAPVTKAGWLYKQASSGVKQWNKRWFVLVDRCLFYYKDEKQESILGSIPLLSFRVAAVQPSDNISRKHTFKAEHAGVRTYFFSAESPEEQEAWIQAMGEAARVQIPPAQKSVPQPVRHSLEKPDSENIPPSKHHQQPPHNNLTKLEPEAKTRGEGDGRGCEKAERRPERPEVKKETLVKANGLPSGPETASEPGSPYPDGPRVPGGGEHPAQPNGWQYSSPSRPGSTAFPPHDGDSGGQRRSFPPRTDPDKIAQRKSSMNQLQQWVNLRRGVPPPEDLRSPSRFYPMPRRVPDYYNPYSSQYPDDYQYYPPGVRPDSICSMPAYDRISPPWALEDKRHSFRNGGGPTYQLHEWKESTSYGRQDGTVWIPSPSRQPVFYDELDAASGSLRRLSLQPRSHSVPRSPSQGSYSRARIYSPVRSPSARFDRLPPRSEDIYADPAAYVMRRSISSPKYDYLGDRRPVPAGLFPYNYPSSPTVHDKMDELLDLQLQRNLEYLDQQMSESETLISMVNRMVENSSPRAHLFMQVPAYPEVFRDGLHTFKLNEQDTDKLLGKLCEQNKVVREQERLVQQLRAEKESLESALMGTHQELEMFGSQPAYPEKLLHKKESLQNQLINIRVELSQATTALTNSTVVYENLESEVSALHDELWEQLNLDIQNEVLNRQIQKEIWRIQDVMEGLRKNNPSRGTDTAKHRGGLGPSATYSSNSPASPLSSASLTSPLSPFSMVSGSQGSPTKPGSSEEPGPPRPPLPKAYVPLESPPTVPPLPNESRFWPYPNSPSWHRSGETAKGQPKTGYETSKKDPSQTSPLGTPRDINLVPTRQEVEAEKQAALNKVGIVPPRTKSPAEEELTPSAVVRRTTNGLTNGLSSRQERPKSAVFSGEGKVKMSVEEQMDRMRRHQSGSMKEKRRSLQLPASPAPEPSTRPAYKVVRRHRSIHEVDISNLEAALRAEEPGGQAYETPREEIARLRKMELEPQHYDVDISKELSTPDKVLIPERYIDLEPDTPLSPEELKEKQKKVERIKTLIAKSSMQNVVPIGEGDSVDVPQDSESQLQEQEKRIEISCALATEASRRGRMLSVQCATPSPPTSPASPTPPVNPLSSDRPRGADSSHTMRV</sequence>
<accession>Q7TQG1</accession>
<accession>Q8K0J5</accession>
<name>PKHA6_MOUSE</name>